<protein>
    <recommendedName>
        <fullName>U3 small nucleolar RNA-associated protein 5</fullName>
        <shortName>U3 snoRNA-associated protein 5</shortName>
    </recommendedName>
    <alternativeName>
        <fullName>U three protein 5</fullName>
    </alternativeName>
    <alternativeName>
        <fullName>U3 protein 5 required for transcription</fullName>
    </alternativeName>
    <alternativeName>
        <fullName>t-UTP5</fullName>
    </alternativeName>
</protein>
<keyword id="KW-0002">3D-structure</keyword>
<keyword id="KW-0539">Nucleus</keyword>
<keyword id="KW-1185">Reference proteome</keyword>
<keyword id="KW-0677">Repeat</keyword>
<keyword id="KW-0687">Ribonucleoprotein</keyword>
<keyword id="KW-0690">Ribosome biogenesis</keyword>
<keyword id="KW-0698">rRNA processing</keyword>
<keyword id="KW-0804">Transcription</keyword>
<keyword id="KW-0853">WD repeat</keyword>
<gene>
    <name type="primary">UTP5</name>
    <name type="ordered locus">YDR398W</name>
    <name type="ORF">D9509.17</name>
</gene>
<sequence length="643" mass="72002">MDSPVLQSAYDPSGQYLCYVTVALDKQRVGVQPTQRATSSGVDTVWNENFLYLEDSKLKVTCLKWVNLASSDTVAIILGMNNGEIWLYSVLANEVTYKFTTGNSYEIKDIDLMGNQLWCIDSSDAFYQFDLLQFKLLQHFRINNCVQLNKLTIVPAGDSVAQLLVASHSISLIDIEEKKVVMTFPGHVSPVSTLQVITNEFFISGAEGDRFLNVYDIHSGMTKCVLVAESDIKELSHSGQADSIAVTTEDGSLEIFVDPLVSSSTKKRGNKSKKSSKKIQIVSKDGRKVPIYNAFINKDLLNVSWLQNATMPYFKNLQWREIPNEYTVEISLNWNNKNKSADRDLHGKDLASATNYVEGNARVTSGDNFKHVDDAIKSWERELTSLEQEQAKPPQANELLTETFGDKLESSTVARISGKKTNLKGSNLKTATTTGTVTVILSQALQSNDHSLLETVLNNRDERVIRDTIFRLKPALAVILLERLAERIARQTHRQGPLNVWVKWCLIIHGGYLVSIPNLMSTLSSLHSTLKRRSDLLPRLLALDARLDCTINKFKTLNYEAGDIHSSEPVVEEDEDDVEYNEELDDAGLIEDGEESYGSEEEEEGDSDNEEEQKHTSSKQDGRLETEQSDGEEEAGYSDVEME</sequence>
<organism>
    <name type="scientific">Saccharomyces cerevisiae (strain ATCC 204508 / S288c)</name>
    <name type="common">Baker's yeast</name>
    <dbReference type="NCBI Taxonomy" id="559292"/>
    <lineage>
        <taxon>Eukaryota</taxon>
        <taxon>Fungi</taxon>
        <taxon>Dikarya</taxon>
        <taxon>Ascomycota</taxon>
        <taxon>Saccharomycotina</taxon>
        <taxon>Saccharomycetes</taxon>
        <taxon>Saccharomycetales</taxon>
        <taxon>Saccharomycetaceae</taxon>
        <taxon>Saccharomyces</taxon>
    </lineage>
</organism>
<evidence type="ECO:0000256" key="1">
    <source>
        <dbReference type="SAM" id="MobiDB-lite"/>
    </source>
</evidence>
<evidence type="ECO:0000269" key="2">
    <source>
    </source>
</evidence>
<evidence type="ECO:0000269" key="3">
    <source>
    </source>
</evidence>
<evidence type="ECO:0000269" key="4">
    <source>
    </source>
</evidence>
<evidence type="ECO:0000305" key="5"/>
<accession>Q04177</accession>
<accession>D6VT31</accession>
<dbReference type="EMBL" id="U32274">
    <property type="protein sequence ID" value="AAB64839.1"/>
    <property type="molecule type" value="Genomic_DNA"/>
</dbReference>
<dbReference type="EMBL" id="BK006938">
    <property type="protein sequence ID" value="DAA12241.1"/>
    <property type="molecule type" value="Genomic_DNA"/>
</dbReference>
<dbReference type="PIR" id="S69681">
    <property type="entry name" value="S69681"/>
</dbReference>
<dbReference type="RefSeq" id="NP_010686.1">
    <property type="nucleotide sequence ID" value="NM_001180706.1"/>
</dbReference>
<dbReference type="PDB" id="5WLC">
    <property type="method" value="EM"/>
    <property type="resolution" value="3.80 A"/>
    <property type="chains" value="LL=1-643"/>
</dbReference>
<dbReference type="PDB" id="6KE6">
    <property type="method" value="EM"/>
    <property type="resolution" value="3.40 A"/>
    <property type="chains" value="A5=1-643"/>
</dbReference>
<dbReference type="PDB" id="6LQP">
    <property type="method" value="EM"/>
    <property type="resolution" value="3.20 A"/>
    <property type="chains" value="A5=1-643"/>
</dbReference>
<dbReference type="PDB" id="6LQQ">
    <property type="method" value="EM"/>
    <property type="resolution" value="4.10 A"/>
    <property type="chains" value="A5=1-643"/>
</dbReference>
<dbReference type="PDB" id="6LQR">
    <property type="method" value="EM"/>
    <property type="resolution" value="8.60 A"/>
    <property type="chains" value="A5=1-643"/>
</dbReference>
<dbReference type="PDB" id="6LQS">
    <property type="method" value="EM"/>
    <property type="resolution" value="3.80 A"/>
    <property type="chains" value="A5=1-643"/>
</dbReference>
<dbReference type="PDB" id="6LQT">
    <property type="method" value="EM"/>
    <property type="resolution" value="4.90 A"/>
    <property type="chains" value="A5=1-643"/>
</dbReference>
<dbReference type="PDB" id="6LQU">
    <property type="method" value="EM"/>
    <property type="resolution" value="3.70 A"/>
    <property type="chains" value="A5=1-643"/>
</dbReference>
<dbReference type="PDB" id="6LQV">
    <property type="method" value="EM"/>
    <property type="resolution" value="4.80 A"/>
    <property type="chains" value="A5=1-643"/>
</dbReference>
<dbReference type="PDB" id="6ND4">
    <property type="method" value="EM"/>
    <property type="resolution" value="4.30 A"/>
    <property type="chains" value="L=1-643"/>
</dbReference>
<dbReference type="PDB" id="6ZQA">
    <property type="method" value="EM"/>
    <property type="resolution" value="4.40 A"/>
    <property type="chains" value="UE=1-643"/>
</dbReference>
<dbReference type="PDB" id="6ZQB">
    <property type="method" value="EM"/>
    <property type="resolution" value="3.90 A"/>
    <property type="chains" value="UE=1-643"/>
</dbReference>
<dbReference type="PDB" id="6ZQC">
    <property type="method" value="EM"/>
    <property type="resolution" value="3.80 A"/>
    <property type="chains" value="UE=1-643"/>
</dbReference>
<dbReference type="PDB" id="6ZQD">
    <property type="method" value="EM"/>
    <property type="resolution" value="3.80 A"/>
    <property type="chains" value="UE=1-643"/>
</dbReference>
<dbReference type="PDB" id="6ZQE">
    <property type="method" value="EM"/>
    <property type="resolution" value="7.10 A"/>
    <property type="chains" value="UI=1-643"/>
</dbReference>
<dbReference type="PDB" id="7AJT">
    <property type="method" value="EM"/>
    <property type="resolution" value="4.60 A"/>
    <property type="chains" value="UE=1-643"/>
</dbReference>
<dbReference type="PDB" id="7AJU">
    <property type="method" value="EM"/>
    <property type="resolution" value="3.80 A"/>
    <property type="chains" value="UE=1-643"/>
</dbReference>
<dbReference type="PDB" id="7D4I">
    <property type="method" value="EM"/>
    <property type="resolution" value="4.00 A"/>
    <property type="chains" value="A5=1-643"/>
</dbReference>
<dbReference type="PDB" id="7D5S">
    <property type="method" value="EM"/>
    <property type="resolution" value="4.60 A"/>
    <property type="chains" value="A5=1-643"/>
</dbReference>
<dbReference type="PDB" id="7D5T">
    <property type="method" value="EM"/>
    <property type="resolution" value="6.00 A"/>
    <property type="chains" value="A5=1-643"/>
</dbReference>
<dbReference type="PDB" id="7D63">
    <property type="method" value="EM"/>
    <property type="resolution" value="12.30 A"/>
    <property type="chains" value="A5=1-643"/>
</dbReference>
<dbReference type="PDB" id="7SUK">
    <property type="method" value="EM"/>
    <property type="resolution" value="3.99 A"/>
    <property type="chains" value="LL=3-557"/>
</dbReference>
<dbReference type="PDBsum" id="5WLC"/>
<dbReference type="PDBsum" id="6KE6"/>
<dbReference type="PDBsum" id="6LQP"/>
<dbReference type="PDBsum" id="6LQQ"/>
<dbReference type="PDBsum" id="6LQR"/>
<dbReference type="PDBsum" id="6LQS"/>
<dbReference type="PDBsum" id="6LQT"/>
<dbReference type="PDBsum" id="6LQU"/>
<dbReference type="PDBsum" id="6LQV"/>
<dbReference type="PDBsum" id="6ND4"/>
<dbReference type="PDBsum" id="6ZQA"/>
<dbReference type="PDBsum" id="6ZQB"/>
<dbReference type="PDBsum" id="6ZQC"/>
<dbReference type="PDBsum" id="6ZQD"/>
<dbReference type="PDBsum" id="6ZQE"/>
<dbReference type="PDBsum" id="7AJT"/>
<dbReference type="PDBsum" id="7AJU"/>
<dbReference type="PDBsum" id="7D4I"/>
<dbReference type="PDBsum" id="7D5S"/>
<dbReference type="PDBsum" id="7D5T"/>
<dbReference type="PDBsum" id="7D63"/>
<dbReference type="PDBsum" id="7SUK"/>
<dbReference type="EMDB" id="EMD-0441"/>
<dbReference type="EMDB" id="EMD-0949"/>
<dbReference type="EMDB" id="EMD-0950"/>
<dbReference type="EMDB" id="EMD-0951"/>
<dbReference type="EMDB" id="EMD-0952"/>
<dbReference type="EMDB" id="EMD-0953"/>
<dbReference type="EMDB" id="EMD-0954"/>
<dbReference type="EMDB" id="EMD-0955"/>
<dbReference type="EMDB" id="EMD-11357"/>
<dbReference type="EMDB" id="EMD-11358"/>
<dbReference type="EMDB" id="EMD-11359"/>
<dbReference type="EMDB" id="EMD-11360"/>
<dbReference type="EMDB" id="EMD-11361"/>
<dbReference type="EMDB" id="EMD-11807"/>
<dbReference type="EMDB" id="EMD-11808"/>
<dbReference type="EMDB" id="EMD-25441"/>
<dbReference type="EMDB" id="EMD-30574"/>
<dbReference type="EMDB" id="EMD-30584"/>
<dbReference type="EMDB" id="EMD-30585"/>
<dbReference type="EMDB" id="EMD-30588"/>
<dbReference type="EMDB" id="EMD-8859"/>
<dbReference type="EMDB" id="EMD-9964"/>
<dbReference type="SMR" id="Q04177"/>
<dbReference type="BioGRID" id="32459">
    <property type="interactions" value="364"/>
</dbReference>
<dbReference type="ComplexPortal" id="CPX-1409">
    <property type="entry name" value="UTP-A complex"/>
</dbReference>
<dbReference type="DIP" id="DIP-1317N"/>
<dbReference type="FunCoup" id="Q04177">
    <property type="interactions" value="946"/>
</dbReference>
<dbReference type="IntAct" id="Q04177">
    <property type="interactions" value="112"/>
</dbReference>
<dbReference type="MINT" id="Q04177"/>
<dbReference type="STRING" id="4932.YDR398W"/>
<dbReference type="iPTMnet" id="Q04177"/>
<dbReference type="PaxDb" id="4932-YDR398W"/>
<dbReference type="PeptideAtlas" id="Q04177"/>
<dbReference type="EnsemblFungi" id="YDR398W_mRNA">
    <property type="protein sequence ID" value="YDR398W"/>
    <property type="gene ID" value="YDR398W"/>
</dbReference>
<dbReference type="GeneID" id="852007"/>
<dbReference type="KEGG" id="sce:YDR398W"/>
<dbReference type="AGR" id="SGD:S000002806"/>
<dbReference type="SGD" id="S000002806">
    <property type="gene designation" value="UTP5"/>
</dbReference>
<dbReference type="VEuPathDB" id="FungiDB:YDR398W"/>
<dbReference type="eggNOG" id="KOG4547">
    <property type="taxonomic scope" value="Eukaryota"/>
</dbReference>
<dbReference type="HOGENOM" id="CLU_023936_0_0_1"/>
<dbReference type="InParanoid" id="Q04177"/>
<dbReference type="OMA" id="WVKWCLI"/>
<dbReference type="OrthoDB" id="30195at2759"/>
<dbReference type="BioCyc" id="YEAST:G3O-29945-MONOMER"/>
<dbReference type="Reactome" id="R-SCE-6791226">
    <property type="pathway name" value="Major pathway of rRNA processing in the nucleolus and cytosol"/>
</dbReference>
<dbReference type="BioGRID-ORCS" id="852007">
    <property type="hits" value="5 hits in 10 CRISPR screens"/>
</dbReference>
<dbReference type="CD-CODE" id="BDAE0F88">
    <property type="entry name" value="Nucleolus"/>
</dbReference>
<dbReference type="PRO" id="PR:Q04177"/>
<dbReference type="Proteomes" id="UP000002311">
    <property type="component" value="Chromosome IV"/>
</dbReference>
<dbReference type="RNAct" id="Q04177">
    <property type="molecule type" value="protein"/>
</dbReference>
<dbReference type="GO" id="GO:0005730">
    <property type="term" value="C:nucleolus"/>
    <property type="evidence" value="ECO:0000314"/>
    <property type="project" value="SGD"/>
</dbReference>
<dbReference type="GO" id="GO:0005654">
    <property type="term" value="C:nucleoplasm"/>
    <property type="evidence" value="ECO:0000304"/>
    <property type="project" value="Reactome"/>
</dbReference>
<dbReference type="GO" id="GO:0033553">
    <property type="term" value="C:rDNA heterochromatin"/>
    <property type="evidence" value="ECO:0000314"/>
    <property type="project" value="SGD"/>
</dbReference>
<dbReference type="GO" id="GO:0032040">
    <property type="term" value="C:small-subunit processome"/>
    <property type="evidence" value="ECO:0000314"/>
    <property type="project" value="SGD"/>
</dbReference>
<dbReference type="GO" id="GO:0034455">
    <property type="term" value="C:t-UTP complex"/>
    <property type="evidence" value="ECO:0000314"/>
    <property type="project" value="SGD"/>
</dbReference>
<dbReference type="GO" id="GO:0030490">
    <property type="term" value="P:maturation of SSU-rRNA"/>
    <property type="evidence" value="ECO:0000303"/>
    <property type="project" value="ComplexPortal"/>
</dbReference>
<dbReference type="GO" id="GO:0000462">
    <property type="term" value="P:maturation of SSU-rRNA from tricistronic rRNA transcript (SSU-rRNA, 5.8S rRNA, LSU-rRNA)"/>
    <property type="evidence" value="ECO:0000315"/>
    <property type="project" value="SGD"/>
</dbReference>
<dbReference type="GO" id="GO:0045943">
    <property type="term" value="P:positive regulation of transcription by RNA polymerase I"/>
    <property type="evidence" value="ECO:0000315"/>
    <property type="project" value="SGD"/>
</dbReference>
<dbReference type="Gene3D" id="2.130.10.10">
    <property type="entry name" value="YVTN repeat-like/Quinoprotein amine dehydrogenase"/>
    <property type="match status" value="1"/>
</dbReference>
<dbReference type="InterPro" id="IPR007148">
    <property type="entry name" value="SSU_processome_Utp12"/>
</dbReference>
<dbReference type="InterPro" id="IPR052414">
    <property type="entry name" value="U3_snoRNA-assoc_WDR"/>
</dbReference>
<dbReference type="InterPro" id="IPR015943">
    <property type="entry name" value="WD40/YVTN_repeat-like_dom_sf"/>
</dbReference>
<dbReference type="InterPro" id="IPR036322">
    <property type="entry name" value="WD40_repeat_dom_sf"/>
</dbReference>
<dbReference type="PANTHER" id="PTHR44267">
    <property type="entry name" value="WD REPEAT-CONTAINING PROTEIN 43"/>
    <property type="match status" value="1"/>
</dbReference>
<dbReference type="PANTHER" id="PTHR44267:SF1">
    <property type="entry name" value="WD REPEAT-CONTAINING PROTEIN 43"/>
    <property type="match status" value="1"/>
</dbReference>
<dbReference type="Pfam" id="PF04003">
    <property type="entry name" value="Utp12"/>
    <property type="match status" value="1"/>
</dbReference>
<dbReference type="SUPFAM" id="SSF50978">
    <property type="entry name" value="WD40 repeat-like"/>
    <property type="match status" value="1"/>
</dbReference>
<name>UTP5_YEAST</name>
<reference key="1">
    <citation type="journal article" date="1997" name="Nature">
        <title>The nucleotide sequence of Saccharomyces cerevisiae chromosome IV.</title>
        <authorList>
            <person name="Jacq C."/>
            <person name="Alt-Moerbe J."/>
            <person name="Andre B."/>
            <person name="Arnold W."/>
            <person name="Bahr A."/>
            <person name="Ballesta J.P.G."/>
            <person name="Bargues M."/>
            <person name="Baron L."/>
            <person name="Becker A."/>
            <person name="Biteau N."/>
            <person name="Bloecker H."/>
            <person name="Blugeon C."/>
            <person name="Boskovic J."/>
            <person name="Brandt P."/>
            <person name="Brueckner M."/>
            <person name="Buitrago M.J."/>
            <person name="Coster F."/>
            <person name="Delaveau T."/>
            <person name="del Rey F."/>
            <person name="Dujon B."/>
            <person name="Eide L.G."/>
            <person name="Garcia-Cantalejo J.M."/>
            <person name="Goffeau A."/>
            <person name="Gomez-Peris A."/>
            <person name="Granotier C."/>
            <person name="Hanemann V."/>
            <person name="Hankeln T."/>
            <person name="Hoheisel J.D."/>
            <person name="Jaeger W."/>
            <person name="Jimenez A."/>
            <person name="Jonniaux J.-L."/>
            <person name="Kraemer C."/>
            <person name="Kuester H."/>
            <person name="Laamanen P."/>
            <person name="Legros Y."/>
            <person name="Louis E.J."/>
            <person name="Moeller-Rieker S."/>
            <person name="Monnet A."/>
            <person name="Moro M."/>
            <person name="Mueller-Auer S."/>
            <person name="Nussbaumer B."/>
            <person name="Paricio N."/>
            <person name="Paulin L."/>
            <person name="Perea J."/>
            <person name="Perez-Alonso M."/>
            <person name="Perez-Ortin J.E."/>
            <person name="Pohl T.M."/>
            <person name="Prydz H."/>
            <person name="Purnelle B."/>
            <person name="Rasmussen S.W."/>
            <person name="Remacha M.A."/>
            <person name="Revuelta J.L."/>
            <person name="Rieger M."/>
            <person name="Salom D."/>
            <person name="Saluz H.P."/>
            <person name="Saiz J.E."/>
            <person name="Saren A.-M."/>
            <person name="Schaefer M."/>
            <person name="Scharfe M."/>
            <person name="Schmidt E.R."/>
            <person name="Schneider C."/>
            <person name="Scholler P."/>
            <person name="Schwarz S."/>
            <person name="Soler-Mira A."/>
            <person name="Urrestarazu L.A."/>
            <person name="Verhasselt P."/>
            <person name="Vissers S."/>
            <person name="Voet M."/>
            <person name="Volckaert G."/>
            <person name="Wagner G."/>
            <person name="Wambutt R."/>
            <person name="Wedler E."/>
            <person name="Wedler H."/>
            <person name="Woelfl S."/>
            <person name="Harris D.E."/>
            <person name="Bowman S."/>
            <person name="Brown D."/>
            <person name="Churcher C.M."/>
            <person name="Connor R."/>
            <person name="Dedman K."/>
            <person name="Gentles S."/>
            <person name="Hamlin N."/>
            <person name="Hunt S."/>
            <person name="Jones L."/>
            <person name="McDonald S."/>
            <person name="Murphy L.D."/>
            <person name="Niblett D."/>
            <person name="Odell C."/>
            <person name="Oliver K."/>
            <person name="Rajandream M.A."/>
            <person name="Richards C."/>
            <person name="Shore L."/>
            <person name="Walsh S.V."/>
            <person name="Barrell B.G."/>
            <person name="Dietrich F.S."/>
            <person name="Mulligan J.T."/>
            <person name="Allen E."/>
            <person name="Araujo R."/>
            <person name="Aviles E."/>
            <person name="Berno A."/>
            <person name="Carpenter J."/>
            <person name="Chen E."/>
            <person name="Cherry J.M."/>
            <person name="Chung E."/>
            <person name="Duncan M."/>
            <person name="Hunicke-Smith S."/>
            <person name="Hyman R.W."/>
            <person name="Komp C."/>
            <person name="Lashkari D."/>
            <person name="Lew H."/>
            <person name="Lin D."/>
            <person name="Mosedale D."/>
            <person name="Nakahara K."/>
            <person name="Namath A."/>
            <person name="Oefner P."/>
            <person name="Oh C."/>
            <person name="Petel F.X."/>
            <person name="Roberts D."/>
            <person name="Schramm S."/>
            <person name="Schroeder M."/>
            <person name="Shogren T."/>
            <person name="Shroff N."/>
            <person name="Winant A."/>
            <person name="Yelton M.A."/>
            <person name="Botstein D."/>
            <person name="Davis R.W."/>
            <person name="Johnston M."/>
            <person name="Andrews S."/>
            <person name="Brinkman R."/>
            <person name="Cooper J."/>
            <person name="Ding H."/>
            <person name="Du Z."/>
            <person name="Favello A."/>
            <person name="Fulton L."/>
            <person name="Gattung S."/>
            <person name="Greco T."/>
            <person name="Hallsworth K."/>
            <person name="Hawkins J."/>
            <person name="Hillier L.W."/>
            <person name="Jier M."/>
            <person name="Johnson D."/>
            <person name="Johnston L."/>
            <person name="Kirsten J."/>
            <person name="Kucaba T."/>
            <person name="Langston Y."/>
            <person name="Latreille P."/>
            <person name="Le T."/>
            <person name="Mardis E."/>
            <person name="Menezes S."/>
            <person name="Miller N."/>
            <person name="Nhan M."/>
            <person name="Pauley A."/>
            <person name="Peluso D."/>
            <person name="Rifkin L."/>
            <person name="Riles L."/>
            <person name="Taich A."/>
            <person name="Trevaskis E."/>
            <person name="Vignati D."/>
            <person name="Wilcox L."/>
            <person name="Wohldman P."/>
            <person name="Vaudin M."/>
            <person name="Wilson R."/>
            <person name="Waterston R."/>
            <person name="Albermann K."/>
            <person name="Hani J."/>
            <person name="Heumann K."/>
            <person name="Kleine K."/>
            <person name="Mewes H.-W."/>
            <person name="Zollner A."/>
            <person name="Zaccaria P."/>
        </authorList>
    </citation>
    <scope>NUCLEOTIDE SEQUENCE [LARGE SCALE GENOMIC DNA]</scope>
    <source>
        <strain>ATCC 204508 / S288c</strain>
    </source>
</reference>
<reference key="2">
    <citation type="journal article" date="2014" name="G3 (Bethesda)">
        <title>The reference genome sequence of Saccharomyces cerevisiae: Then and now.</title>
        <authorList>
            <person name="Engel S.R."/>
            <person name="Dietrich F.S."/>
            <person name="Fisk D.G."/>
            <person name="Binkley G."/>
            <person name="Balakrishnan R."/>
            <person name="Costanzo M.C."/>
            <person name="Dwight S.S."/>
            <person name="Hitz B.C."/>
            <person name="Karra K."/>
            <person name="Nash R.S."/>
            <person name="Weng S."/>
            <person name="Wong E.D."/>
            <person name="Lloyd P."/>
            <person name="Skrzypek M.S."/>
            <person name="Miyasato S.R."/>
            <person name="Simison M."/>
            <person name="Cherry J.M."/>
        </authorList>
    </citation>
    <scope>GENOME REANNOTATION</scope>
    <source>
        <strain>ATCC 204508 / S288c</strain>
    </source>
</reference>
<reference key="3">
    <citation type="journal article" date="2002" name="Nature">
        <title>A large nucleolar U3 ribonucleoprotein required for 18S ribosomal RNA biogenesis.</title>
        <authorList>
            <person name="Dragon F."/>
            <person name="Gallagher J.E.G."/>
            <person name="Compagnone-Post P.A."/>
            <person name="Mitchell B.M."/>
            <person name="Porwancher K.A."/>
            <person name="Wehner K.A."/>
            <person name="Wormsley S."/>
            <person name="Settlage R.E."/>
            <person name="Shabanowitz J."/>
            <person name="Osheim Y."/>
            <person name="Beyer A.L."/>
            <person name="Hunt D.F."/>
            <person name="Baserga S.J."/>
        </authorList>
    </citation>
    <scope>FUNCTION</scope>
    <scope>INTERACTION WITH MPP10 AND SNORNA U3</scope>
    <scope>IDENTIFICATION IN SSU PROCESSOME BY MASS SPECTROMETRY</scope>
    <scope>SUBCELLULAR LOCATION</scope>
</reference>
<reference key="4">
    <citation type="journal article" date="2003" name="Nature">
        <title>Global analysis of protein expression in yeast.</title>
        <authorList>
            <person name="Ghaemmaghami S."/>
            <person name="Huh W.-K."/>
            <person name="Bower K."/>
            <person name="Howson R.W."/>
            <person name="Belle A."/>
            <person name="Dephoure N."/>
            <person name="O'Shea E.K."/>
            <person name="Weissman J.S."/>
        </authorList>
    </citation>
    <scope>LEVEL OF PROTEIN EXPRESSION [LARGE SCALE ANALYSIS]</scope>
</reference>
<reference key="5">
    <citation type="journal article" date="2004" name="Genes Dev.">
        <title>RNA polymerase I transcription and pre-rRNA processing are linked by specific SSU processome components.</title>
        <authorList>
            <person name="Gallagher J.E.G."/>
            <person name="Dunbar D.A."/>
            <person name="Granneman S."/>
            <person name="Mitchell B.M."/>
            <person name="Osheim Y."/>
            <person name="Beyer A.L."/>
            <person name="Baserga S.J."/>
        </authorList>
    </citation>
    <scope>FUNCTION</scope>
    <scope>IDENTIFICATION IN COMPLEX WITH OTHER T-UTPS</scope>
    <scope>SUBCELLULAR LOCATION</scope>
</reference>
<feature type="chain" id="PRO_0000051318" description="U3 small nucleolar RNA-associated protein 5">
    <location>
        <begin position="1"/>
        <end position="643"/>
    </location>
</feature>
<feature type="repeat" description="WD 1">
    <location>
        <begin position="14"/>
        <end position="54"/>
    </location>
</feature>
<feature type="repeat" description="WD 2">
    <location>
        <begin position="55"/>
        <end position="98"/>
    </location>
</feature>
<feature type="repeat" description="WD 3">
    <location>
        <begin position="186"/>
        <end position="225"/>
    </location>
</feature>
<feature type="repeat" description="WD 4">
    <location>
        <begin position="227"/>
        <end position="266"/>
    </location>
</feature>
<feature type="repeat" description="WD 5">
    <location>
        <begin position="340"/>
        <end position="389"/>
    </location>
</feature>
<feature type="repeat" description="WD 6">
    <location>
        <begin position="471"/>
        <end position="511"/>
    </location>
</feature>
<feature type="region of interest" description="Disordered" evidence="1">
    <location>
        <begin position="565"/>
        <end position="643"/>
    </location>
</feature>
<feature type="compositionally biased region" description="Acidic residues" evidence="1">
    <location>
        <begin position="570"/>
        <end position="611"/>
    </location>
</feature>
<feature type="compositionally biased region" description="Basic and acidic residues" evidence="1">
    <location>
        <begin position="612"/>
        <end position="626"/>
    </location>
</feature>
<feature type="compositionally biased region" description="Acidic residues" evidence="1">
    <location>
        <begin position="627"/>
        <end position="643"/>
    </location>
</feature>
<comment type="function">
    <text evidence="2 4">Involved in nucleolar processing of pre-18S ribosomal RNA. Required for optimal pre-ribosomal RNA transcription by RNA polymerase I together with a subset of U3 proteins required for transcription (t-UTPs).</text>
</comment>
<comment type="subunit">
    <text evidence="2 4">Interacts with snoRNA U3. Interacts with MPP10. Component of the ribosomal small subunit (SSU) processome composed of at least 40 protein subunits and snoRNA U3. In the absence of snoRNA3, forms a complex with other t-UTPs. This complex can associate with pre-18S ribosomal RNAs.</text>
</comment>
<comment type="interaction">
    <interactant intactId="EBI-35844">
        <id>Q04177</id>
    </interactant>
    <interactant intactId="EBI-9237">
        <id>P32899</id>
        <label>IMP3</label>
    </interactant>
    <organismsDiffer>false</organismsDiffer>
    <experiments>3</experiments>
</comment>
<comment type="interaction">
    <interactant intactId="EBI-35844">
        <id>Q04177</id>
    </interactant>
    <interactant intactId="EBI-1884">
        <id>P42945</id>
        <label>UTP10</label>
    </interactant>
    <organismsDiffer>false</organismsDiffer>
    <experiments>3</experiments>
</comment>
<comment type="interaction">
    <interactant intactId="EBI-35844">
        <id>Q04177</id>
    </interactant>
    <interactant intactId="EBI-28183">
        <id>Q04305</id>
        <label>UTP15</label>
    </interactant>
    <organismsDiffer>false</organismsDiffer>
    <experiments>11</experiments>
</comment>
<comment type="interaction">
    <interactant intactId="EBI-35844">
        <id>Q04177</id>
    </interactant>
    <interactant intactId="EBI-1878">
        <id>P53254</id>
        <label>UTP22</label>
    </interactant>
    <organismsDiffer>false</organismsDiffer>
    <experiments>3</experiments>
</comment>
<comment type="interaction">
    <interactant intactId="EBI-35844">
        <id>Q04177</id>
    </interactant>
    <interactant intactId="EBI-35712">
        <id>Q06679</id>
        <label>UTP4</label>
    </interactant>
    <organismsDiffer>false</organismsDiffer>
    <experiments>7</experiments>
</comment>
<comment type="interaction">
    <interactant intactId="EBI-35844">
        <id>Q04177</id>
    </interactant>
    <interactant intactId="EBI-23301">
        <id>P53276</id>
        <label>UTP8</label>
    </interactant>
    <organismsDiffer>false</organismsDiffer>
    <experiments>3</experiments>
</comment>
<comment type="interaction">
    <interactant intactId="EBI-35844">
        <id>Q04177</id>
    </interactant>
    <interactant intactId="EBI-24892">
        <id>P38882</id>
        <label>UTP9</label>
    </interactant>
    <organismsDiffer>false</organismsDiffer>
    <experiments>3</experiments>
</comment>
<comment type="subcellular location">
    <subcellularLocation>
        <location evidence="2 4">Nucleus</location>
        <location evidence="2 4">Nucleolus</location>
    </subcellularLocation>
    <text>Associated with ribosomal chromatin, even in the absence of transcription.</text>
</comment>
<comment type="miscellaneous">
    <text evidence="3">Present with 33100 molecules/cell in log phase SD medium.</text>
</comment>
<comment type="similarity">
    <text evidence="5">Belongs to the UTP5 family.</text>
</comment>
<proteinExistence type="evidence at protein level"/>